<name>MCRB_METTE</name>
<dbReference type="EC" id="2.8.4.1" evidence="1"/>
<dbReference type="UniPathway" id="UPA00646">
    <property type="reaction ID" value="UER00699"/>
</dbReference>
<dbReference type="GO" id="GO:0005737">
    <property type="term" value="C:cytoplasm"/>
    <property type="evidence" value="ECO:0007669"/>
    <property type="project" value="UniProtKB-SubCell"/>
</dbReference>
<dbReference type="GO" id="GO:0050524">
    <property type="term" value="F:coenzyme-B sulfoethylthiotransferase activity"/>
    <property type="evidence" value="ECO:0007669"/>
    <property type="project" value="UniProtKB-EC"/>
</dbReference>
<dbReference type="GO" id="GO:0015948">
    <property type="term" value="P:methanogenesis"/>
    <property type="evidence" value="ECO:0007669"/>
    <property type="project" value="UniProtKB-KW"/>
</dbReference>
<accession>P22949</accession>
<proteinExistence type="evidence at protein level"/>
<reference key="1">
    <citation type="journal article" date="1991" name="J. Bacteriol.">
        <title>Purification and properties of methyl coenzyme M methylreductase from acetate-grown Methanosarcina thermophila.</title>
        <authorList>
            <person name="Jablonski P.E."/>
            <person name="Ferry J.G."/>
        </authorList>
    </citation>
    <scope>PROTEIN SEQUENCE</scope>
    <scope>FUNCTION</scope>
    <scope>CATALYTIC ACTIVITY</scope>
    <scope>BIOPHYSICOCHEMICAL PROPERTIES</scope>
    <scope>COFACTOR</scope>
    <scope>SUBUNIT</scope>
    <scope>SUBCELLULAR LOCATION</scope>
    <source>
        <strain>ATCC 43570 / DSM 1825 / OCM 12 / TM-1</strain>
    </source>
</reference>
<sequence length="18" mass="2020">SDTVDIYDAGKILERVII</sequence>
<evidence type="ECO:0000269" key="1">
    <source>
    </source>
</evidence>
<evidence type="ECO:0000305" key="2"/>
<evidence type="ECO:0000305" key="3">
    <source>
    </source>
</evidence>
<comment type="function">
    <text evidence="1">Component of the methyl-coenzyme M reductase (MCR) I that catalyzes the reductive cleavage of methyl-coenzyme M (CoM-S-CH3 or 2-(methylthio)ethanesulfonate) using coenzyme B (CoB or 7-mercaptoheptanoylthreonine phosphate) as reductant which results in the production of methane and the mixed heterodisulfide of CoB and CoM (CoM-S-S-CoB). This is the final step in methanogenesis.</text>
</comment>
<comment type="catalytic activity">
    <reaction evidence="1">
        <text>coenzyme B + methyl-coenzyme M = methane + coenzyme M-coenzyme B heterodisulfide</text>
        <dbReference type="Rhea" id="RHEA:12532"/>
        <dbReference type="ChEBI" id="CHEBI:16183"/>
        <dbReference type="ChEBI" id="CHEBI:58286"/>
        <dbReference type="ChEBI" id="CHEBI:58411"/>
        <dbReference type="ChEBI" id="CHEBI:58596"/>
        <dbReference type="EC" id="2.8.4.1"/>
    </reaction>
    <physiologicalReaction direction="left-to-right" evidence="3">
        <dbReference type="Rhea" id="RHEA:12533"/>
    </physiologicalReaction>
</comment>
<comment type="cofactor">
    <cofactor evidence="1">
        <name>coenzyme F430</name>
        <dbReference type="ChEBI" id="CHEBI:60540"/>
    </cofactor>
    <text evidence="1">Binds 1 coenzyme F430 non-covalently per MCR heterotrimeric complex. Coenzyme F430 is a yellow nickel porphinoid. Methyl-coenzyme-M reductase is activated when the enzyme-bound coenzyme F430 is reduced, probably to the Ni(I) oxidation state.</text>
</comment>
<comment type="biophysicochemical properties">
    <phDependence>
        <text evidence="1">Optimum pH is 7.0.</text>
    </phDependence>
    <temperatureDependence>
        <text evidence="1">Optimum temperature is 60 degrees Celsius.</text>
    </temperatureDependence>
</comment>
<comment type="pathway">
    <text evidence="3">One-carbon metabolism; methyl-coenzyme M reduction; methane from methyl-coenzyme M: step 1/1.</text>
</comment>
<comment type="subunit">
    <text evidence="1">MCR from M.thermophila is a heterotrimer composed of an alpha, a beta, and a gamma subunit.</text>
</comment>
<comment type="subcellular location">
    <subcellularLocation>
        <location evidence="3">Cytoplasm</location>
    </subcellularLocation>
</comment>
<comment type="similarity">
    <text evidence="2">Belongs to the methyl-coenzyme M reductase beta subunit family.</text>
</comment>
<protein>
    <recommendedName>
        <fullName>Methyl-coenzyme M reductase subunit beta</fullName>
        <ecNumber evidence="1">2.8.4.1</ecNumber>
    </recommendedName>
    <alternativeName>
        <fullName>Coenzyme-B sulfoethylthiotransferase beta</fullName>
    </alternativeName>
</protein>
<organism>
    <name type="scientific">Methanosarcina thermophila</name>
    <dbReference type="NCBI Taxonomy" id="2210"/>
    <lineage>
        <taxon>Archaea</taxon>
        <taxon>Methanobacteriati</taxon>
        <taxon>Methanobacteriota</taxon>
        <taxon>Stenosarchaea group</taxon>
        <taxon>Methanomicrobia</taxon>
        <taxon>Methanosarcinales</taxon>
        <taxon>Methanosarcinaceae</taxon>
        <taxon>Methanosarcina</taxon>
    </lineage>
</organism>
<feature type="chain" id="PRO_0000147470" description="Methyl-coenzyme M reductase subunit beta">
    <location>
        <begin position="1"/>
        <end position="18" status="greater than"/>
    </location>
</feature>
<feature type="non-terminal residue">
    <location>
        <position position="18"/>
    </location>
</feature>
<keyword id="KW-0963">Cytoplasm</keyword>
<keyword id="KW-0903">Direct protein sequencing</keyword>
<keyword id="KW-0484">Methanogenesis</keyword>
<keyword id="KW-0808">Transferase</keyword>